<name>LFTR_ROSDO</name>
<feature type="chain" id="PRO_0000258092" description="Leucyl/phenylalanyl-tRNA--protein transferase">
    <location>
        <begin position="1"/>
        <end position="210"/>
    </location>
</feature>
<sequence>MRLTPDVLMQAYATGIFPMAEHRDDPDIFWVDPLRRGIMPLRGFHMSRSLRRQMLRTAFDIRIDQDFAGVVDGCADRADTWINDEIRRLYNILHAQDRAHSLEVWEGDTLVGGVYGVTLGAAFFGESMFSRRSNASKIALACLVDRLLDGGFALFDTQFLTEHLASLGAIEISRAQYQKRLQEACARPASFLNPPLRSPQEVVQRITQMS</sequence>
<dbReference type="EC" id="2.3.2.6" evidence="1"/>
<dbReference type="EMBL" id="CP000362">
    <property type="protein sequence ID" value="ABG32378.1"/>
    <property type="molecule type" value="Genomic_DNA"/>
</dbReference>
<dbReference type="RefSeq" id="WP_011568994.1">
    <property type="nucleotide sequence ID" value="NC_008209.1"/>
</dbReference>
<dbReference type="SMR" id="Q165G5"/>
<dbReference type="STRING" id="375451.RD1_2852"/>
<dbReference type="KEGG" id="rde:RD1_2852"/>
<dbReference type="eggNOG" id="COG2360">
    <property type="taxonomic scope" value="Bacteria"/>
</dbReference>
<dbReference type="HOGENOM" id="CLU_075045_1_1_5"/>
<dbReference type="OrthoDB" id="9790282at2"/>
<dbReference type="Proteomes" id="UP000007029">
    <property type="component" value="Chromosome"/>
</dbReference>
<dbReference type="GO" id="GO:0005737">
    <property type="term" value="C:cytoplasm"/>
    <property type="evidence" value="ECO:0007669"/>
    <property type="project" value="UniProtKB-SubCell"/>
</dbReference>
<dbReference type="GO" id="GO:0008914">
    <property type="term" value="F:leucyl-tRNA--protein transferase activity"/>
    <property type="evidence" value="ECO:0007669"/>
    <property type="project" value="UniProtKB-UniRule"/>
</dbReference>
<dbReference type="GO" id="GO:0030163">
    <property type="term" value="P:protein catabolic process"/>
    <property type="evidence" value="ECO:0007669"/>
    <property type="project" value="UniProtKB-UniRule"/>
</dbReference>
<dbReference type="Gene3D" id="3.40.630.70">
    <property type="entry name" value="Leucyl/phenylalanyl-tRNA-protein transferase, C-terminal domain"/>
    <property type="match status" value="1"/>
</dbReference>
<dbReference type="Gene3D" id="3.30.70.3550">
    <property type="entry name" value="Leucyl/phenylalanyl-tRNA-protein transferase, N-terminal domain"/>
    <property type="match status" value="1"/>
</dbReference>
<dbReference type="HAMAP" id="MF_00688">
    <property type="entry name" value="Leu_Phe_trans"/>
    <property type="match status" value="1"/>
</dbReference>
<dbReference type="InterPro" id="IPR016181">
    <property type="entry name" value="Acyl_CoA_acyltransferase"/>
</dbReference>
<dbReference type="InterPro" id="IPR004616">
    <property type="entry name" value="Leu/Phe-tRNA_Trfase"/>
</dbReference>
<dbReference type="InterPro" id="IPR042203">
    <property type="entry name" value="Leu/Phe-tRNA_Trfase_C"/>
</dbReference>
<dbReference type="InterPro" id="IPR042221">
    <property type="entry name" value="Leu/Phe-tRNA_Trfase_N"/>
</dbReference>
<dbReference type="NCBIfam" id="TIGR00667">
    <property type="entry name" value="aat"/>
    <property type="match status" value="1"/>
</dbReference>
<dbReference type="PANTHER" id="PTHR30098">
    <property type="entry name" value="LEUCYL/PHENYLALANYL-TRNA--PROTEIN TRANSFERASE"/>
    <property type="match status" value="1"/>
</dbReference>
<dbReference type="PANTHER" id="PTHR30098:SF2">
    <property type="entry name" value="LEUCYL_PHENYLALANYL-TRNA--PROTEIN TRANSFERASE"/>
    <property type="match status" value="1"/>
</dbReference>
<dbReference type="Pfam" id="PF03588">
    <property type="entry name" value="Leu_Phe_trans"/>
    <property type="match status" value="1"/>
</dbReference>
<dbReference type="SUPFAM" id="SSF55729">
    <property type="entry name" value="Acyl-CoA N-acyltransferases (Nat)"/>
    <property type="match status" value="1"/>
</dbReference>
<protein>
    <recommendedName>
        <fullName evidence="1">Leucyl/phenylalanyl-tRNA--protein transferase</fullName>
        <ecNumber evidence="1">2.3.2.6</ecNumber>
    </recommendedName>
    <alternativeName>
        <fullName evidence="1">L/F-transferase</fullName>
    </alternativeName>
    <alternativeName>
        <fullName evidence="1">Leucyltransferase</fullName>
    </alternativeName>
    <alternativeName>
        <fullName evidence="1">Phenyalanyltransferase</fullName>
    </alternativeName>
</protein>
<proteinExistence type="inferred from homology"/>
<reference key="1">
    <citation type="journal article" date="2007" name="J. Bacteriol.">
        <title>The complete genome sequence of Roseobacter denitrificans reveals a mixotrophic rather than photosynthetic metabolism.</title>
        <authorList>
            <person name="Swingley W.D."/>
            <person name="Sadekar S."/>
            <person name="Mastrian S.D."/>
            <person name="Matthies H.J."/>
            <person name="Hao J."/>
            <person name="Ramos H."/>
            <person name="Acharya C.R."/>
            <person name="Conrad A.L."/>
            <person name="Taylor H.L."/>
            <person name="Dejesa L.C."/>
            <person name="Shah M.K."/>
            <person name="O'Huallachain M.E."/>
            <person name="Lince M.T."/>
            <person name="Blankenship R.E."/>
            <person name="Beatty J.T."/>
            <person name="Touchman J.W."/>
        </authorList>
    </citation>
    <scope>NUCLEOTIDE SEQUENCE [LARGE SCALE GENOMIC DNA]</scope>
    <source>
        <strain>ATCC 33942 / OCh 114</strain>
    </source>
</reference>
<gene>
    <name evidence="1" type="primary">aat</name>
    <name type="ordered locus">RD1_2852</name>
</gene>
<evidence type="ECO:0000255" key="1">
    <source>
        <dbReference type="HAMAP-Rule" id="MF_00688"/>
    </source>
</evidence>
<keyword id="KW-0012">Acyltransferase</keyword>
<keyword id="KW-0963">Cytoplasm</keyword>
<keyword id="KW-1185">Reference proteome</keyword>
<keyword id="KW-0808">Transferase</keyword>
<accession>Q165G5</accession>
<comment type="function">
    <text evidence="1">Functions in the N-end rule pathway of protein degradation where it conjugates Leu, Phe and, less efficiently, Met from aminoacyl-tRNAs to the N-termini of proteins containing an N-terminal arginine or lysine.</text>
</comment>
<comment type="catalytic activity">
    <reaction evidence="1">
        <text>N-terminal L-lysyl-[protein] + L-leucyl-tRNA(Leu) = N-terminal L-leucyl-L-lysyl-[protein] + tRNA(Leu) + H(+)</text>
        <dbReference type="Rhea" id="RHEA:12340"/>
        <dbReference type="Rhea" id="RHEA-COMP:9613"/>
        <dbReference type="Rhea" id="RHEA-COMP:9622"/>
        <dbReference type="Rhea" id="RHEA-COMP:12670"/>
        <dbReference type="Rhea" id="RHEA-COMP:12671"/>
        <dbReference type="ChEBI" id="CHEBI:15378"/>
        <dbReference type="ChEBI" id="CHEBI:65249"/>
        <dbReference type="ChEBI" id="CHEBI:78442"/>
        <dbReference type="ChEBI" id="CHEBI:78494"/>
        <dbReference type="ChEBI" id="CHEBI:133043"/>
        <dbReference type="EC" id="2.3.2.6"/>
    </reaction>
</comment>
<comment type="catalytic activity">
    <reaction evidence="1">
        <text>N-terminal L-arginyl-[protein] + L-leucyl-tRNA(Leu) = N-terminal L-leucyl-L-arginyl-[protein] + tRNA(Leu) + H(+)</text>
        <dbReference type="Rhea" id="RHEA:50416"/>
        <dbReference type="Rhea" id="RHEA-COMP:9613"/>
        <dbReference type="Rhea" id="RHEA-COMP:9622"/>
        <dbReference type="Rhea" id="RHEA-COMP:12672"/>
        <dbReference type="Rhea" id="RHEA-COMP:12673"/>
        <dbReference type="ChEBI" id="CHEBI:15378"/>
        <dbReference type="ChEBI" id="CHEBI:64719"/>
        <dbReference type="ChEBI" id="CHEBI:78442"/>
        <dbReference type="ChEBI" id="CHEBI:78494"/>
        <dbReference type="ChEBI" id="CHEBI:133044"/>
        <dbReference type="EC" id="2.3.2.6"/>
    </reaction>
</comment>
<comment type="catalytic activity">
    <reaction evidence="1">
        <text>L-phenylalanyl-tRNA(Phe) + an N-terminal L-alpha-aminoacyl-[protein] = an N-terminal L-phenylalanyl-L-alpha-aminoacyl-[protein] + tRNA(Phe)</text>
        <dbReference type="Rhea" id="RHEA:43632"/>
        <dbReference type="Rhea" id="RHEA-COMP:9668"/>
        <dbReference type="Rhea" id="RHEA-COMP:9699"/>
        <dbReference type="Rhea" id="RHEA-COMP:10636"/>
        <dbReference type="Rhea" id="RHEA-COMP:10637"/>
        <dbReference type="ChEBI" id="CHEBI:78442"/>
        <dbReference type="ChEBI" id="CHEBI:78531"/>
        <dbReference type="ChEBI" id="CHEBI:78597"/>
        <dbReference type="ChEBI" id="CHEBI:83561"/>
        <dbReference type="EC" id="2.3.2.6"/>
    </reaction>
</comment>
<comment type="subcellular location">
    <subcellularLocation>
        <location evidence="1">Cytoplasm</location>
    </subcellularLocation>
</comment>
<comment type="similarity">
    <text evidence="1">Belongs to the L/F-transferase family.</text>
</comment>
<organism>
    <name type="scientific">Roseobacter denitrificans (strain ATCC 33942 / OCh 114)</name>
    <name type="common">Erythrobacter sp. (strain OCh 114)</name>
    <name type="synonym">Roseobacter denitrificans</name>
    <dbReference type="NCBI Taxonomy" id="375451"/>
    <lineage>
        <taxon>Bacteria</taxon>
        <taxon>Pseudomonadati</taxon>
        <taxon>Pseudomonadota</taxon>
        <taxon>Alphaproteobacteria</taxon>
        <taxon>Rhodobacterales</taxon>
        <taxon>Roseobacteraceae</taxon>
        <taxon>Roseobacter</taxon>
    </lineage>
</organism>